<sequence>MRLNTLSPAAGSKHAPKRVGRGIGSGLGKTGGRGHKGQKSRSGGKVRPGFEGGQMPLKQRLPKFGFTSRKSLVSAEVRVAELAKVTGDVVDLNSLKAANVITKNIENVKIVLSGEINKAVTVKGLRVTKGAKAAIEAAGGKIEE</sequence>
<organism>
    <name type="scientific">Vibrio vulnificus (strain CMCP6)</name>
    <dbReference type="NCBI Taxonomy" id="216895"/>
    <lineage>
        <taxon>Bacteria</taxon>
        <taxon>Pseudomonadati</taxon>
        <taxon>Pseudomonadota</taxon>
        <taxon>Gammaproteobacteria</taxon>
        <taxon>Vibrionales</taxon>
        <taxon>Vibrionaceae</taxon>
        <taxon>Vibrio</taxon>
    </lineage>
</organism>
<name>RL15_VIBVU</name>
<keyword id="KW-0687">Ribonucleoprotein</keyword>
<keyword id="KW-0689">Ribosomal protein</keyword>
<keyword id="KW-0694">RNA-binding</keyword>
<keyword id="KW-0699">rRNA-binding</keyword>
<feature type="chain" id="PRO_0000104851" description="Large ribosomal subunit protein uL15">
    <location>
        <begin position="1"/>
        <end position="144"/>
    </location>
</feature>
<feature type="region of interest" description="Disordered" evidence="2">
    <location>
        <begin position="1"/>
        <end position="57"/>
    </location>
</feature>
<feature type="compositionally biased region" description="Gly residues" evidence="2">
    <location>
        <begin position="21"/>
        <end position="31"/>
    </location>
</feature>
<feature type="compositionally biased region" description="Basic residues" evidence="2">
    <location>
        <begin position="32"/>
        <end position="44"/>
    </location>
</feature>
<dbReference type="EMBL" id="AE016795">
    <property type="protein sequence ID" value="AAO09250.1"/>
    <property type="molecule type" value="Genomic_DNA"/>
</dbReference>
<dbReference type="RefSeq" id="WP_011078814.1">
    <property type="nucleotide sequence ID" value="NC_004459.3"/>
</dbReference>
<dbReference type="SMR" id="Q8DE59"/>
<dbReference type="GeneID" id="93895047"/>
<dbReference type="KEGG" id="vvu:VV1_0741"/>
<dbReference type="HOGENOM" id="CLU_055188_4_2_6"/>
<dbReference type="Proteomes" id="UP000002275">
    <property type="component" value="Chromosome 1"/>
</dbReference>
<dbReference type="GO" id="GO:0022625">
    <property type="term" value="C:cytosolic large ribosomal subunit"/>
    <property type="evidence" value="ECO:0007669"/>
    <property type="project" value="TreeGrafter"/>
</dbReference>
<dbReference type="GO" id="GO:0019843">
    <property type="term" value="F:rRNA binding"/>
    <property type="evidence" value="ECO:0007669"/>
    <property type="project" value="UniProtKB-UniRule"/>
</dbReference>
<dbReference type="GO" id="GO:0003735">
    <property type="term" value="F:structural constituent of ribosome"/>
    <property type="evidence" value="ECO:0007669"/>
    <property type="project" value="InterPro"/>
</dbReference>
<dbReference type="GO" id="GO:0006412">
    <property type="term" value="P:translation"/>
    <property type="evidence" value="ECO:0007669"/>
    <property type="project" value="UniProtKB-UniRule"/>
</dbReference>
<dbReference type="FunFam" id="3.100.10.10:FF:000003">
    <property type="entry name" value="50S ribosomal protein L15"/>
    <property type="match status" value="1"/>
</dbReference>
<dbReference type="Gene3D" id="3.100.10.10">
    <property type="match status" value="1"/>
</dbReference>
<dbReference type="HAMAP" id="MF_01341">
    <property type="entry name" value="Ribosomal_uL15"/>
    <property type="match status" value="1"/>
</dbReference>
<dbReference type="InterPro" id="IPR030878">
    <property type="entry name" value="Ribosomal_uL15"/>
</dbReference>
<dbReference type="InterPro" id="IPR021131">
    <property type="entry name" value="Ribosomal_uL15/eL18"/>
</dbReference>
<dbReference type="InterPro" id="IPR036227">
    <property type="entry name" value="Ribosomal_uL15/eL18_sf"/>
</dbReference>
<dbReference type="InterPro" id="IPR005749">
    <property type="entry name" value="Ribosomal_uL15_bac-type"/>
</dbReference>
<dbReference type="InterPro" id="IPR001196">
    <property type="entry name" value="Ribosomal_uL15_CS"/>
</dbReference>
<dbReference type="NCBIfam" id="TIGR01071">
    <property type="entry name" value="rplO_bact"/>
    <property type="match status" value="1"/>
</dbReference>
<dbReference type="PANTHER" id="PTHR12934">
    <property type="entry name" value="50S RIBOSOMAL PROTEIN L15"/>
    <property type="match status" value="1"/>
</dbReference>
<dbReference type="PANTHER" id="PTHR12934:SF11">
    <property type="entry name" value="LARGE RIBOSOMAL SUBUNIT PROTEIN UL15M"/>
    <property type="match status" value="1"/>
</dbReference>
<dbReference type="Pfam" id="PF00828">
    <property type="entry name" value="Ribosomal_L27A"/>
    <property type="match status" value="1"/>
</dbReference>
<dbReference type="SUPFAM" id="SSF52080">
    <property type="entry name" value="Ribosomal proteins L15p and L18e"/>
    <property type="match status" value="1"/>
</dbReference>
<dbReference type="PROSITE" id="PS00475">
    <property type="entry name" value="RIBOSOMAL_L15"/>
    <property type="match status" value="1"/>
</dbReference>
<proteinExistence type="inferred from homology"/>
<accession>Q8DE59</accession>
<protein>
    <recommendedName>
        <fullName evidence="1">Large ribosomal subunit protein uL15</fullName>
    </recommendedName>
    <alternativeName>
        <fullName evidence="3">50S ribosomal protein L15</fullName>
    </alternativeName>
</protein>
<gene>
    <name evidence="1" type="primary">rplO</name>
    <name type="ordered locus">VV1_0741</name>
</gene>
<evidence type="ECO:0000255" key="1">
    <source>
        <dbReference type="HAMAP-Rule" id="MF_01341"/>
    </source>
</evidence>
<evidence type="ECO:0000256" key="2">
    <source>
        <dbReference type="SAM" id="MobiDB-lite"/>
    </source>
</evidence>
<evidence type="ECO:0000305" key="3"/>
<reference key="1">
    <citation type="submission" date="2002-12" db="EMBL/GenBank/DDBJ databases">
        <title>Complete genome sequence of Vibrio vulnificus CMCP6.</title>
        <authorList>
            <person name="Rhee J.H."/>
            <person name="Kim S.Y."/>
            <person name="Chung S.S."/>
            <person name="Kim J.J."/>
            <person name="Moon Y.H."/>
            <person name="Jeong H."/>
            <person name="Choy H.E."/>
        </authorList>
    </citation>
    <scope>NUCLEOTIDE SEQUENCE [LARGE SCALE GENOMIC DNA]</scope>
    <source>
        <strain>CMCP6</strain>
    </source>
</reference>
<comment type="function">
    <text evidence="1">Binds to the 23S rRNA.</text>
</comment>
<comment type="subunit">
    <text evidence="1">Part of the 50S ribosomal subunit.</text>
</comment>
<comment type="similarity">
    <text evidence="1">Belongs to the universal ribosomal protein uL15 family.</text>
</comment>